<name>PLSB_VIBCM</name>
<accession>C3LPT5</accession>
<dbReference type="EC" id="2.3.1.15" evidence="1"/>
<dbReference type="EMBL" id="CP001233">
    <property type="protein sequence ID" value="ACP04429.1"/>
    <property type="molecule type" value="Genomic_DNA"/>
</dbReference>
<dbReference type="SMR" id="C3LPT5"/>
<dbReference type="KEGG" id="vcm:VCM66_0093"/>
<dbReference type="HOGENOM" id="CLU_015407_0_0_6"/>
<dbReference type="UniPathway" id="UPA00557">
    <property type="reaction ID" value="UER00612"/>
</dbReference>
<dbReference type="Proteomes" id="UP000001217">
    <property type="component" value="Chromosome I"/>
</dbReference>
<dbReference type="GO" id="GO:0005886">
    <property type="term" value="C:plasma membrane"/>
    <property type="evidence" value="ECO:0007669"/>
    <property type="project" value="UniProtKB-SubCell"/>
</dbReference>
<dbReference type="GO" id="GO:0004366">
    <property type="term" value="F:glycerol-3-phosphate O-acyltransferase activity"/>
    <property type="evidence" value="ECO:0007669"/>
    <property type="project" value="UniProtKB-UniRule"/>
</dbReference>
<dbReference type="GO" id="GO:0016024">
    <property type="term" value="P:CDP-diacylglycerol biosynthetic process"/>
    <property type="evidence" value="ECO:0007669"/>
    <property type="project" value="UniProtKB-UniRule"/>
</dbReference>
<dbReference type="GO" id="GO:0006631">
    <property type="term" value="P:fatty acid metabolic process"/>
    <property type="evidence" value="ECO:0007669"/>
    <property type="project" value="TreeGrafter"/>
</dbReference>
<dbReference type="CDD" id="cd07993">
    <property type="entry name" value="LPLAT_DHAPAT-like"/>
    <property type="match status" value="1"/>
</dbReference>
<dbReference type="HAMAP" id="MF_00393">
    <property type="entry name" value="Glyc3P_acyltrans"/>
    <property type="match status" value="1"/>
</dbReference>
<dbReference type="InterPro" id="IPR022284">
    <property type="entry name" value="GPAT/DHAPAT"/>
</dbReference>
<dbReference type="InterPro" id="IPR045520">
    <property type="entry name" value="GPAT/DHAPAT_C"/>
</dbReference>
<dbReference type="InterPro" id="IPR041728">
    <property type="entry name" value="GPAT/DHAPAT_LPLAT"/>
</dbReference>
<dbReference type="InterPro" id="IPR028354">
    <property type="entry name" value="GPAT_PlsB"/>
</dbReference>
<dbReference type="InterPro" id="IPR002123">
    <property type="entry name" value="Plipid/glycerol_acylTrfase"/>
</dbReference>
<dbReference type="NCBIfam" id="TIGR03703">
    <property type="entry name" value="plsB"/>
    <property type="match status" value="1"/>
</dbReference>
<dbReference type="NCBIfam" id="NF003441">
    <property type="entry name" value="PRK04974.1"/>
    <property type="match status" value="1"/>
</dbReference>
<dbReference type="PANTHER" id="PTHR12563:SF17">
    <property type="entry name" value="DIHYDROXYACETONE PHOSPHATE ACYLTRANSFERASE"/>
    <property type="match status" value="1"/>
</dbReference>
<dbReference type="PANTHER" id="PTHR12563">
    <property type="entry name" value="GLYCEROL-3-PHOSPHATE ACYLTRANSFERASE"/>
    <property type="match status" value="1"/>
</dbReference>
<dbReference type="Pfam" id="PF01553">
    <property type="entry name" value="Acyltransferase"/>
    <property type="match status" value="1"/>
</dbReference>
<dbReference type="Pfam" id="PF19277">
    <property type="entry name" value="GPAT_C"/>
    <property type="match status" value="1"/>
</dbReference>
<dbReference type="PIRSF" id="PIRSF500064">
    <property type="entry name" value="GPAT"/>
    <property type="match status" value="1"/>
</dbReference>
<dbReference type="PIRSF" id="PIRSF000437">
    <property type="entry name" value="GPAT_DHAPAT"/>
    <property type="match status" value="1"/>
</dbReference>
<dbReference type="SMART" id="SM00563">
    <property type="entry name" value="PlsC"/>
    <property type="match status" value="1"/>
</dbReference>
<dbReference type="SUPFAM" id="SSF69593">
    <property type="entry name" value="Glycerol-3-phosphate (1)-acyltransferase"/>
    <property type="match status" value="1"/>
</dbReference>
<comment type="catalytic activity">
    <reaction evidence="1">
        <text>sn-glycerol 3-phosphate + an acyl-CoA = a 1-acyl-sn-glycero-3-phosphate + CoA</text>
        <dbReference type="Rhea" id="RHEA:15325"/>
        <dbReference type="ChEBI" id="CHEBI:57287"/>
        <dbReference type="ChEBI" id="CHEBI:57597"/>
        <dbReference type="ChEBI" id="CHEBI:57970"/>
        <dbReference type="ChEBI" id="CHEBI:58342"/>
        <dbReference type="EC" id="2.3.1.15"/>
    </reaction>
</comment>
<comment type="pathway">
    <text evidence="1">Phospholipid metabolism; CDP-diacylglycerol biosynthesis; CDP-diacylglycerol from sn-glycerol 3-phosphate: step 1/3.</text>
</comment>
<comment type="subcellular location">
    <subcellularLocation>
        <location evidence="1">Cell inner membrane</location>
        <topology evidence="1">Peripheral membrane protein</topology>
        <orientation evidence="1">Cytoplasmic side</orientation>
    </subcellularLocation>
</comment>
<comment type="domain">
    <text evidence="1">The HXXXXD motif is essential for acyltransferase activity and may constitute the binding site for the phosphate moiety of the glycerol-3-phosphate.</text>
</comment>
<comment type="similarity">
    <text evidence="1">Belongs to the GPAT/DAPAT family.</text>
</comment>
<feature type="chain" id="PRO_1000192410" description="Glycerol-3-phosphate acyltransferase">
    <location>
        <begin position="1"/>
        <end position="811"/>
    </location>
</feature>
<feature type="short sequence motif" description="HXXXXD motif">
    <location>
        <begin position="308"/>
        <end position="313"/>
    </location>
</feature>
<evidence type="ECO:0000255" key="1">
    <source>
        <dbReference type="HAMAP-Rule" id="MF_00393"/>
    </source>
</evidence>
<gene>
    <name evidence="1" type="primary">plsB</name>
    <name type="ordered locus">VCM66_0093</name>
</gene>
<proteinExistence type="inferred from homology"/>
<keyword id="KW-0012">Acyltransferase</keyword>
<keyword id="KW-0997">Cell inner membrane</keyword>
<keyword id="KW-1003">Cell membrane</keyword>
<keyword id="KW-0444">Lipid biosynthesis</keyword>
<keyword id="KW-0443">Lipid metabolism</keyword>
<keyword id="KW-0472">Membrane</keyword>
<keyword id="KW-0594">Phospholipid biosynthesis</keyword>
<keyword id="KW-1208">Phospholipid metabolism</keyword>
<keyword id="KW-0808">Transferase</keyword>
<reference key="1">
    <citation type="journal article" date="2008" name="PLoS ONE">
        <title>A recalibrated molecular clock and independent origins for the cholera pandemic clones.</title>
        <authorList>
            <person name="Feng L."/>
            <person name="Reeves P.R."/>
            <person name="Lan R."/>
            <person name="Ren Y."/>
            <person name="Gao C."/>
            <person name="Zhou Z."/>
            <person name="Ren Y."/>
            <person name="Cheng J."/>
            <person name="Wang W."/>
            <person name="Wang J."/>
            <person name="Qian W."/>
            <person name="Li D."/>
            <person name="Wang L."/>
        </authorList>
    </citation>
    <scope>NUCLEOTIDE SEQUENCE [LARGE SCALE GENOMIC DNA]</scope>
    <source>
        <strain>M66-2</strain>
    </source>
</reference>
<protein>
    <recommendedName>
        <fullName evidence="1">Glycerol-3-phosphate acyltransferase</fullName>
        <shortName evidence="1">GPAT</shortName>
        <ecNumber evidence="1">2.3.1.15</ecNumber>
    </recommendedName>
</protein>
<organism>
    <name type="scientific">Vibrio cholerae serotype O1 (strain M66-2)</name>
    <dbReference type="NCBI Taxonomy" id="579112"/>
    <lineage>
        <taxon>Bacteria</taxon>
        <taxon>Pseudomonadati</taxon>
        <taxon>Pseudomonadota</taxon>
        <taxon>Gammaproteobacteria</taxon>
        <taxon>Vibrionales</taxon>
        <taxon>Vibrionaceae</taxon>
        <taxon>Vibrio</taxon>
    </lineage>
</organism>
<sequence>MNSMSSGHLLSRSLLKLPMSVLVKGTAIPSNPIQDLDIDTHKPVIYALPFRSNVDLLTLQTHAKEAGLPDPLEPLMLNGKAFQRYVFIASRPTLLSSDQHVPSDSIALFSELLTEHKLDSELDVQVIPATVLWGRKPGKEGQERPYLQALNGPEKALAVLASGRDCLVRFSPVVSMRYMADTHGTDASIAHKLARVARIHFSRQKLAASGPNLPQRAQLFARLMNSPAIEKAIADEAKSKQIPLEKARKEAHDILDEIAADFSYSLVKKGDRILGWLWNRIYQGLNINNAATVRRLAQDGHEIVYVPCHRSHMDYLLLSYVLYHEGMVPPHIAAGINLNFFPAGPIFRRGGAFFIRRSFKGAPLYSTIFREYLAELFAKGYSVEYFSEGGRSRTGRLLPAKTGMLAMTIQAMLRGLNRPVTLVPVYIGYEHVMEVGTYAKELRGKRKEKENAGLVLRTLRKLRNFGQGYVNFGEPIPLNQFLNETVPQWTQDIDPMGESKPQWMTPTVNKLANRMMTHINDAAAVNAMTLCATALLASRQRALARDNLIKQVDCYLSLLRNVPYSATSTLPSESAEKLVEHAESLDKFVVETDTMGDIISLDRNQSILMTYYRNNIIHLLALPSLIAQLLIRQQSVSLEKVQATVAQIYPFLKQELFLRFEAEELNDLVLRYVAELARQGLVTVEGKTVTLNQAQTQVLMLLGRIISETLQRYAIALNLLVSCPHLGKAELEEKSQEVAQRLGRLHGINAPEFFDKGVFASLFVTLQEQGYLDDQGRCVLETAKPLSRQLYALIYPEVRMTIQESLCQVDA</sequence>